<accession>P13215</accession>
<dbReference type="EMBL" id="D00750">
    <property type="protein sequence ID" value="BAA00647.1"/>
    <property type="molecule type" value="Genomic_DNA"/>
</dbReference>
<dbReference type="EMBL" id="M19868">
    <property type="protein sequence ID" value="AAA46066.1"/>
    <property type="status" value="ALT_SEQ"/>
    <property type="molecule type" value="mRNA"/>
</dbReference>
<dbReference type="SMR" id="P13215"/>
<dbReference type="GO" id="GO:0042025">
    <property type="term" value="C:host cell nucleus"/>
    <property type="evidence" value="ECO:0007669"/>
    <property type="project" value="UniProtKB-SubCell"/>
</dbReference>
<dbReference type="GO" id="GO:0003697">
    <property type="term" value="F:single-stranded DNA binding"/>
    <property type="evidence" value="ECO:0007669"/>
    <property type="project" value="InterPro"/>
</dbReference>
<dbReference type="GO" id="GO:0006260">
    <property type="term" value="P:DNA replication"/>
    <property type="evidence" value="ECO:0007669"/>
    <property type="project" value="UniProtKB-KW"/>
</dbReference>
<dbReference type="Gene3D" id="1.20.190.40">
    <property type="entry name" value="Viral ssDNA binding protein, head domain"/>
    <property type="match status" value="1"/>
</dbReference>
<dbReference type="HAMAP" id="MF_04007">
    <property type="entry name" value="HSV_DNBI"/>
    <property type="match status" value="1"/>
</dbReference>
<dbReference type="InterPro" id="IPR035989">
    <property type="entry name" value="DBP_sf"/>
</dbReference>
<dbReference type="InterPro" id="IPR043031">
    <property type="entry name" value="Viral_ssDBP_head"/>
</dbReference>
<dbReference type="InterPro" id="IPR000635">
    <property type="entry name" value="Viral_ssDNA-bd"/>
</dbReference>
<dbReference type="Pfam" id="PF00747">
    <property type="entry name" value="Viral_DNA_bp"/>
    <property type="match status" value="1"/>
</dbReference>
<dbReference type="SUPFAM" id="SSF118208">
    <property type="entry name" value="Viral ssDNA binding protein"/>
    <property type="match status" value="1"/>
</dbReference>
<evidence type="ECO:0000255" key="1">
    <source>
        <dbReference type="HAMAP-Rule" id="MF_04007"/>
    </source>
</evidence>
<keyword id="KW-0235">DNA replication</keyword>
<keyword id="KW-0238">DNA-binding</keyword>
<keyword id="KW-1048">Host nucleus</keyword>
<gene>
    <name evidence="1" type="primary">DBP</name>
    <name type="synonym">UL57</name>
</gene>
<proteinExistence type="evidence at transcript level"/>
<reference key="1">
    <citation type="journal article" date="1990" name="J. Gen. Virol.">
        <title>Nucleotide sequence of a cytomegalovirus single-stranded DNA-binding protein gene: comparison with alpha- and gammaherpesvirus counterparts reveals conserved segments.</title>
        <authorList>
            <person name="Anders D.G."/>
        </authorList>
    </citation>
    <scope>NUCLEOTIDE SEQUENCE [GENOMIC DNA]</scope>
</reference>
<reference key="2">
    <citation type="journal article" date="1988" name="J. Virol.">
        <title>Location, transcript analysis, and partial nucleotide sequence of the cytomegalovirus gene encoding an early DNA-binding protein with similarities to ICP8 of herpes simplex virus type 1.</title>
        <authorList>
            <person name="Anders D.G."/>
            <person name="Gibson W."/>
        </authorList>
    </citation>
    <scope>NUCLEOTIDE SEQUENCE [MRNA] OF 205-308</scope>
</reference>
<name>DNBI_SCMVC</name>
<feature type="chain" id="PRO_0000115760" description="Major DNA-binding protein">
    <location>
        <begin position="1"/>
        <end position="1160"/>
    </location>
</feature>
<feature type="region of interest" description="Required for nuclear localization" evidence="1">
    <location>
        <begin position="1139"/>
        <end position="1160"/>
    </location>
</feature>
<feature type="short sequence motif" description="Required for filament formation" evidence="1">
    <location>
        <begin position="808"/>
        <end position="809"/>
    </location>
</feature>
<organism>
    <name type="scientific">Simian cytomegalovirus (strain Colburn)</name>
    <dbReference type="NCBI Taxonomy" id="50292"/>
    <lineage>
        <taxon>Viruses</taxon>
        <taxon>Duplodnaviria</taxon>
        <taxon>Heunggongvirae</taxon>
        <taxon>Peploviricota</taxon>
        <taxon>Herviviricetes</taxon>
        <taxon>Herpesvirales</taxon>
        <taxon>Orthoherpesviridae</taxon>
        <taxon>Betaherpesvirinae</taxon>
        <taxon>Cytomegalovirus</taxon>
        <taxon>Cytomegalovirus cercopithecinebeta5</taxon>
    </lineage>
</organism>
<protein>
    <recommendedName>
        <fullName evidence="1">Major DNA-binding protein</fullName>
    </recommendedName>
</protein>
<organismHost>
    <name type="scientific">Macaca</name>
    <name type="common">macaques</name>
    <dbReference type="NCBI Taxonomy" id="9539"/>
</organismHost>
<sequence>MSNEELSALAPVGPAAYVYFTKTNHEMNEVLATLSLCDSSSPVVIAPLLMGLTVDQDFCTSVRTPVVCYDGGVLTKVTSFCPFALYFYNTQGIVDFSEPHGDVQRLCDETRQRYAIESYMPEEGRAPTDLAALCTAAGCDPQEVLVHVVVGNGMKEFMYAGQLIPCFEEAAPTRLNDCDAVRVPLYPPTLFGSLQADVDSDELSLDKRSSFVESRGLYVPAVSETLFYYVYTSWCQALRFSETKVLIEAALKQFVNDSQQSVKLAPHKKYFGYTSQKLSSLEKDHLMLSDAVICELGFSFASVFLDSAYGASDSMVYSEWPVVVNATDHRDLIRALTELKLHLSTHISALLFSCNSILYHNRLVYLTSNKNASGTGASQEVLLKSIHFANGLTGLCEDTYNDARKLIKCSGVVAKDERYAPYHLSLICGTCPQLFSAFIWYLNRVSVYNTGLTGSSTLSNHLIGCSSSLCGACGGTCCHTCYNTAFVRVQTRLPQMPRLPKKEPSVVVMQSRFLNDVDVLGTFGRRYSAESKEASLDAKADEGSASTSNRTASSSVDRTHRLNRILDYCKKMRLIDSVTGEDTMTINGRSDFINLVSSLNKFVDDEAMSFVSEVRMKSNRDEVLGATQAFNLDLNPFAVSFSPILAYEYYRVIFAIIQNVALITATSYIVDNPLTTSLVSRWVTQHFQSIHGAFSTTSSRKGFLFIRNVKSSKNADHDRLPDFKLYARGTYSVISMEIKLSRLSVPSLLMFRVKNRPISKASKGTTAHVFFRREHVPKKNPVKGCLGFLLYKYHDKLFPDCGFSCLQFWQKVCANALPKNVNIGDMGEFNNFVKFVISVTADYNEHDLIDVPPDCMLNYLENRFHNKFLCFYGFKDYIGTLHGLTTRLTYQNHAQFPYLLGESPNFASAADFALRLKDLKATGVTAPLASTVTRESLMRTIFEQRSLVTVSFSIEKYAGVNNNKEIYQFGQIGYFSGNGVERSLNTNSIGGQDYKFMRQRCILATKLSDVLIKRSRRDNVLFDEDIIKNRVMAALDSENLDVDPELMAMYEILSTREEIPERDDVLFFVDGCQAVADSLMEKFSRLQEMGVDDFSLVNLQQVLDSRPECGGGGGEVHDLSALFTAASGEAVGNSVGLNARGGEHAFDEDCGLLPAKRGRL</sequence>
<comment type="function">
    <text>Single-stranded DNA-binding protein required for DNA replication.</text>
</comment>
<comment type="function">
    <text evidence="1">Plays several crucial roles in viral infection. Participates in the opening of the viral DNA origin to initiate replication by interacting with the origin-binding protein. May disrupt loops, hairpins and other secondary structures present on ssDNA to reduce and eliminate pausing of viral DNA polymerase at specific sites during elongation. Promotes viral DNA recombination by performing strand-transfer, characterized by the ability to transfer a DNA strand from a linear duplex to a complementary single-stranded DNA circle. Can also catalyze the renaturation of complementary single strands. Additionally, reorganizes the host cell nucleus, leading to the formation of prereplicative sites and replication compartments. This process is driven by the protein which can form double-helical filaments in the absence of DNA.</text>
</comment>
<comment type="subunit">
    <text evidence="1">Homooligomers. Forms double-helical filaments necessary for the formation of replication compartments within the host nucleus. Interacts with the origin-binding protein. Interacts with the helicase primase complex; this interaction stimulates primer synthesis activity of the helicase-primase complex. Interacts with the DNA polymerase. Interacts with the alkaline exonuclease; this interaction increases its nuclease processivity.</text>
</comment>
<comment type="subcellular location">
    <subcellularLocation>
        <location evidence="1">Host nucleus</location>
    </subcellularLocation>
    <text evidence="1">In the absence of DNA replication, found in the nuclear framework-associated structures (prereplicative sites). As viral DNA replication proceeds, it migrates to globular intranuclear structures (replication compartments).</text>
</comment>
<comment type="similarity">
    <text evidence="1">Belongs to the herpesviridae major DNA-binding protein family.</text>
</comment>